<reference key="1">
    <citation type="submission" date="1996-11" db="EMBL/GenBank/DDBJ databases">
        <authorList>
            <person name="Glanzmann P.J."/>
            <person name="Gustafson J."/>
            <person name="Berger-Baechi B."/>
        </authorList>
    </citation>
    <scope>NUCLEOTIDE SEQUENCE [GENOMIC DNA]</scope>
</reference>
<reference key="2">
    <citation type="journal article" date="1999" name="Antimicrob. Agents Chemother.">
        <title>glmM operon and methicillin-resistant glmM suppressor mutants in Staphylococcus aureus.</title>
        <authorList>
            <person name="Glanzmann P.J."/>
            <person name="Gustafson J."/>
            <person name="Komatsuzawa H."/>
            <person name="Ohhta K."/>
            <person name="Berger-Baechi B."/>
        </authorList>
    </citation>
    <scope>NUCLEOTIDE SEQUENCE [GENOMIC DNA]</scope>
    <scope>CATALYTIC ACTIVITY</scope>
</reference>
<reference key="3">
    <citation type="book" date="2006" name="Gram positive pathogens, 2nd edition">
        <title>The Staphylococcus aureus NCTC 8325 genome.</title>
        <editorList>
            <person name="Fischetti V."/>
            <person name="Novick R."/>
            <person name="Ferretti J."/>
            <person name="Portnoy D."/>
            <person name="Rood J."/>
        </editorList>
        <authorList>
            <person name="Gillaspy A.F."/>
            <person name="Worrell V."/>
            <person name="Orvis J."/>
            <person name="Roe B.A."/>
            <person name="Dyer D.W."/>
            <person name="Iandolo J.J."/>
        </authorList>
    </citation>
    <scope>NUCLEOTIDE SEQUENCE [LARGE SCALE GENOMIC DNA]</scope>
    <source>
        <strain>NCTC 8325 / PS 47</strain>
    </source>
</reference>
<sequence length="451" mass="49266">MGKYFGTDGVRGVANQELTPELAFKLGRYGGYVLAHNKGEKHPRVLVGRDTRVSGEMLESALIAGLISIGAEVMRLGIISTPGVAYLTRDMGAELGVMISASHNPVADNGIKFFGSDGFKLSDEQENEIEALLDQENPELPRPVGNDIVHYSDYFEGAQKYLSYLKSTVDVNFEGLKIALDGANGSTSSLAPFLFGDLEADTETIGCSPDGYNINEKCGSTHPEKLAEKVVETESDFGLAFDGDGDRIIAVDENGQIVDGDQIMFIIGQEMHKNQELNNDMIVSTVMSNLGFYKALEQEGIKSNKTKVGDRYVVEEMRRGNYNLGGEQSGHIVMMDYNTTGDGLLTGIQLASVIKMTGKSLSELAGQMKKYPQSLINVRVTDKYRVEENVDVKEVMTKVEVEMNGEGRILVRPSGTEPLVRVMVEAATDEDAERFAQQIADVVQDKMGLDK</sequence>
<keyword id="KW-0413">Isomerase</keyword>
<keyword id="KW-0460">Magnesium</keyword>
<keyword id="KW-0479">Metal-binding</keyword>
<keyword id="KW-0597">Phosphoprotein</keyword>
<keyword id="KW-1185">Reference proteome</keyword>
<organism>
    <name type="scientific">Staphylococcus aureus (strain NCTC 8325 / PS 47)</name>
    <dbReference type="NCBI Taxonomy" id="93061"/>
    <lineage>
        <taxon>Bacteria</taxon>
        <taxon>Bacillati</taxon>
        <taxon>Bacillota</taxon>
        <taxon>Bacilli</taxon>
        <taxon>Bacillales</taxon>
        <taxon>Staphylococcaceae</taxon>
        <taxon>Staphylococcus</taxon>
    </lineage>
</organism>
<gene>
    <name evidence="1" type="primary">glmM</name>
    <name type="synonym">femD</name>
    <name type="ordered locus">SAOUHSC_02405</name>
</gene>
<evidence type="ECO:0000255" key="1">
    <source>
        <dbReference type="HAMAP-Rule" id="MF_01554"/>
    </source>
</evidence>
<evidence type="ECO:0000269" key="2">
    <source>
    </source>
</evidence>
<feature type="chain" id="PRO_0000147958" description="Phosphoglucosamine mutase">
    <location>
        <begin position="1"/>
        <end position="451"/>
    </location>
</feature>
<feature type="active site" description="Phosphoserine intermediate" evidence="1">
    <location>
        <position position="102"/>
    </location>
</feature>
<feature type="binding site" description="via phosphate group" evidence="1">
    <location>
        <position position="102"/>
    </location>
    <ligand>
        <name>Mg(2+)</name>
        <dbReference type="ChEBI" id="CHEBI:18420"/>
    </ligand>
</feature>
<feature type="binding site" evidence="1">
    <location>
        <position position="242"/>
    </location>
    <ligand>
        <name>Mg(2+)</name>
        <dbReference type="ChEBI" id="CHEBI:18420"/>
    </ligand>
</feature>
<feature type="binding site" evidence="1">
    <location>
        <position position="244"/>
    </location>
    <ligand>
        <name>Mg(2+)</name>
        <dbReference type="ChEBI" id="CHEBI:18420"/>
    </ligand>
</feature>
<feature type="binding site" evidence="1">
    <location>
        <position position="246"/>
    </location>
    <ligand>
        <name>Mg(2+)</name>
        <dbReference type="ChEBI" id="CHEBI:18420"/>
    </ligand>
</feature>
<feature type="modified residue" description="Phosphoserine" evidence="1">
    <location>
        <position position="102"/>
    </location>
</feature>
<name>GLMM_STAA8</name>
<dbReference type="EC" id="5.4.2.10" evidence="1"/>
<dbReference type="EMBL" id="Y09570">
    <property type="protein sequence ID" value="CAA70762.1"/>
    <property type="molecule type" value="Genomic_DNA"/>
</dbReference>
<dbReference type="EMBL" id="Y15477">
    <property type="protein sequence ID" value="CAA75651.1"/>
    <property type="molecule type" value="Genomic_DNA"/>
</dbReference>
<dbReference type="EMBL" id="CP000253">
    <property type="protein sequence ID" value="ABD31434.1"/>
    <property type="molecule type" value="Genomic_DNA"/>
</dbReference>
<dbReference type="RefSeq" id="WP_000521491.1">
    <property type="nucleotide sequence ID" value="NZ_LS483365.1"/>
</dbReference>
<dbReference type="RefSeq" id="YP_500881.1">
    <property type="nucleotide sequence ID" value="NC_007795.1"/>
</dbReference>
<dbReference type="SMR" id="P0C0V7"/>
<dbReference type="STRING" id="93061.SAOUHSC_02405"/>
<dbReference type="PaxDb" id="1280-SAXN108_2405"/>
<dbReference type="GeneID" id="3919620"/>
<dbReference type="KEGG" id="sao:SAOUHSC_02405"/>
<dbReference type="PATRIC" id="fig|93061.5.peg.2177"/>
<dbReference type="eggNOG" id="COG1109">
    <property type="taxonomic scope" value="Bacteria"/>
</dbReference>
<dbReference type="HOGENOM" id="CLU_016950_7_0_9"/>
<dbReference type="OrthoDB" id="9806956at2"/>
<dbReference type="PRO" id="PR:P0C0V7"/>
<dbReference type="Proteomes" id="UP000008816">
    <property type="component" value="Chromosome"/>
</dbReference>
<dbReference type="GO" id="GO:0005829">
    <property type="term" value="C:cytosol"/>
    <property type="evidence" value="ECO:0000318"/>
    <property type="project" value="GO_Central"/>
</dbReference>
<dbReference type="GO" id="GO:0000287">
    <property type="term" value="F:magnesium ion binding"/>
    <property type="evidence" value="ECO:0007669"/>
    <property type="project" value="UniProtKB-UniRule"/>
</dbReference>
<dbReference type="GO" id="GO:0008966">
    <property type="term" value="F:phosphoglucosamine mutase activity"/>
    <property type="evidence" value="ECO:0000318"/>
    <property type="project" value="GO_Central"/>
</dbReference>
<dbReference type="GO" id="GO:0004615">
    <property type="term" value="F:phosphomannomutase activity"/>
    <property type="evidence" value="ECO:0000318"/>
    <property type="project" value="GO_Central"/>
</dbReference>
<dbReference type="GO" id="GO:0005975">
    <property type="term" value="P:carbohydrate metabolic process"/>
    <property type="evidence" value="ECO:0007669"/>
    <property type="project" value="InterPro"/>
</dbReference>
<dbReference type="GO" id="GO:0009252">
    <property type="term" value="P:peptidoglycan biosynthetic process"/>
    <property type="evidence" value="ECO:0000318"/>
    <property type="project" value="GO_Central"/>
</dbReference>
<dbReference type="GO" id="GO:0006048">
    <property type="term" value="P:UDP-N-acetylglucosamine biosynthetic process"/>
    <property type="evidence" value="ECO:0000318"/>
    <property type="project" value="GO_Central"/>
</dbReference>
<dbReference type="CDD" id="cd05802">
    <property type="entry name" value="GlmM"/>
    <property type="match status" value="1"/>
</dbReference>
<dbReference type="FunFam" id="3.30.310.50:FF:000001">
    <property type="entry name" value="Phosphoglucosamine mutase"/>
    <property type="match status" value="1"/>
</dbReference>
<dbReference type="FunFam" id="3.40.120.10:FF:000001">
    <property type="entry name" value="Phosphoglucosamine mutase"/>
    <property type="match status" value="1"/>
</dbReference>
<dbReference type="FunFam" id="3.40.120.10:FF:000002">
    <property type="entry name" value="Phosphoglucosamine mutase"/>
    <property type="match status" value="1"/>
</dbReference>
<dbReference type="Gene3D" id="3.40.120.10">
    <property type="entry name" value="Alpha-D-Glucose-1,6-Bisphosphate, subunit A, domain 3"/>
    <property type="match status" value="3"/>
</dbReference>
<dbReference type="Gene3D" id="3.30.310.50">
    <property type="entry name" value="Alpha-D-phosphohexomutase, C-terminal domain"/>
    <property type="match status" value="1"/>
</dbReference>
<dbReference type="HAMAP" id="MF_01554_B">
    <property type="entry name" value="GlmM_B"/>
    <property type="match status" value="1"/>
</dbReference>
<dbReference type="InterPro" id="IPR005844">
    <property type="entry name" value="A-D-PHexomutase_a/b/a-I"/>
</dbReference>
<dbReference type="InterPro" id="IPR016055">
    <property type="entry name" value="A-D-PHexomutase_a/b/a-I/II/III"/>
</dbReference>
<dbReference type="InterPro" id="IPR005845">
    <property type="entry name" value="A-D-PHexomutase_a/b/a-II"/>
</dbReference>
<dbReference type="InterPro" id="IPR005846">
    <property type="entry name" value="A-D-PHexomutase_a/b/a-III"/>
</dbReference>
<dbReference type="InterPro" id="IPR005843">
    <property type="entry name" value="A-D-PHexomutase_C"/>
</dbReference>
<dbReference type="InterPro" id="IPR036900">
    <property type="entry name" value="A-D-PHexomutase_C_sf"/>
</dbReference>
<dbReference type="InterPro" id="IPR016066">
    <property type="entry name" value="A-D-PHexomutase_CS"/>
</dbReference>
<dbReference type="InterPro" id="IPR005841">
    <property type="entry name" value="Alpha-D-phosphohexomutase_SF"/>
</dbReference>
<dbReference type="InterPro" id="IPR006352">
    <property type="entry name" value="GlmM_bact"/>
</dbReference>
<dbReference type="InterPro" id="IPR050060">
    <property type="entry name" value="Phosphoglucosamine_mutase"/>
</dbReference>
<dbReference type="NCBIfam" id="TIGR01455">
    <property type="entry name" value="glmM"/>
    <property type="match status" value="1"/>
</dbReference>
<dbReference type="NCBIfam" id="NF008139">
    <property type="entry name" value="PRK10887.1"/>
    <property type="match status" value="1"/>
</dbReference>
<dbReference type="PANTHER" id="PTHR42946:SF1">
    <property type="entry name" value="PHOSPHOGLUCOMUTASE (ALPHA-D-GLUCOSE-1,6-BISPHOSPHATE-DEPENDENT)"/>
    <property type="match status" value="1"/>
</dbReference>
<dbReference type="PANTHER" id="PTHR42946">
    <property type="entry name" value="PHOSPHOHEXOSE MUTASE"/>
    <property type="match status" value="1"/>
</dbReference>
<dbReference type="Pfam" id="PF02878">
    <property type="entry name" value="PGM_PMM_I"/>
    <property type="match status" value="1"/>
</dbReference>
<dbReference type="Pfam" id="PF02879">
    <property type="entry name" value="PGM_PMM_II"/>
    <property type="match status" value="1"/>
</dbReference>
<dbReference type="Pfam" id="PF02880">
    <property type="entry name" value="PGM_PMM_III"/>
    <property type="match status" value="1"/>
</dbReference>
<dbReference type="Pfam" id="PF00408">
    <property type="entry name" value="PGM_PMM_IV"/>
    <property type="match status" value="1"/>
</dbReference>
<dbReference type="PRINTS" id="PR00509">
    <property type="entry name" value="PGMPMM"/>
</dbReference>
<dbReference type="SUPFAM" id="SSF55957">
    <property type="entry name" value="Phosphoglucomutase, C-terminal domain"/>
    <property type="match status" value="1"/>
</dbReference>
<dbReference type="SUPFAM" id="SSF53738">
    <property type="entry name" value="Phosphoglucomutase, first 3 domains"/>
    <property type="match status" value="3"/>
</dbReference>
<dbReference type="PROSITE" id="PS00710">
    <property type="entry name" value="PGM_PMM"/>
    <property type="match status" value="1"/>
</dbReference>
<comment type="function">
    <text>Catalyzes the conversion of glucosamine-6-phosphate to glucosamine-1-phosphate.</text>
</comment>
<comment type="catalytic activity">
    <reaction evidence="1 2">
        <text>alpha-D-glucosamine 1-phosphate = D-glucosamine 6-phosphate</text>
        <dbReference type="Rhea" id="RHEA:23424"/>
        <dbReference type="ChEBI" id="CHEBI:58516"/>
        <dbReference type="ChEBI" id="CHEBI:58725"/>
        <dbReference type="EC" id="5.4.2.10"/>
    </reaction>
</comment>
<comment type="cofactor">
    <cofactor evidence="1">
        <name>Mg(2+)</name>
        <dbReference type="ChEBI" id="CHEBI:18420"/>
    </cofactor>
    <text evidence="1">Binds 1 Mg(2+) ion per subunit.</text>
</comment>
<comment type="PTM">
    <text evidence="1">Activated by phosphorylation.</text>
</comment>
<comment type="miscellaneous">
    <text>Disruption of glmM results in a drastically reduced methicillin resistance and in teicoplanin hypersusceptibility.</text>
</comment>
<comment type="similarity">
    <text evidence="1">Belongs to the phosphohexose mutase family.</text>
</comment>
<accession>P0C0V7</accession>
<accession>P95685</accession>
<accession>P95710</accession>
<accession>Q2FW94</accession>
<proteinExistence type="evidence at protein level"/>
<protein>
    <recommendedName>
        <fullName evidence="1">Phosphoglucosamine mutase</fullName>
        <ecNumber evidence="1">5.4.2.10</ecNumber>
    </recommendedName>
</protein>